<sequence length="241" mass="27190">MQHKSPVVTWDLFGLDIKFNLASILMVIITSLIVLVIAIACTRNLQKRPTGKQNFIEWVFDFVRGIIESNLAWKKGGQFHFLTVTLILFIFVGNMLGLPFAIVIDHTLWWKSPTADATVTLTLATMVILLTHYYGIKMRGTKNYFKNYGQPFLALTPVNIFEEFTNTLTLGLRLYGNIYAGEILIGLLSSLIIGHAAWGWIIGVPGLIAWQAFSIFIGTIQAYIFIMLSMVYMSHKIADDH</sequence>
<dbReference type="EMBL" id="AM295250">
    <property type="protein sequence ID" value="CAL28519.1"/>
    <property type="molecule type" value="Genomic_DNA"/>
</dbReference>
<dbReference type="RefSeq" id="WP_015900859.1">
    <property type="nucleotide sequence ID" value="NC_012121.1"/>
</dbReference>
<dbReference type="SMR" id="B9DMF0"/>
<dbReference type="GeneID" id="93794066"/>
<dbReference type="KEGG" id="sca:SCA_1613"/>
<dbReference type="eggNOG" id="COG0356">
    <property type="taxonomic scope" value="Bacteria"/>
</dbReference>
<dbReference type="HOGENOM" id="CLU_041018_2_3_9"/>
<dbReference type="OrthoDB" id="9789241at2"/>
<dbReference type="BioCyc" id="SCAR396513:SCA_RS08190-MONOMER"/>
<dbReference type="Proteomes" id="UP000000444">
    <property type="component" value="Chromosome"/>
</dbReference>
<dbReference type="GO" id="GO:0005886">
    <property type="term" value="C:plasma membrane"/>
    <property type="evidence" value="ECO:0007669"/>
    <property type="project" value="UniProtKB-SubCell"/>
</dbReference>
<dbReference type="GO" id="GO:0045259">
    <property type="term" value="C:proton-transporting ATP synthase complex"/>
    <property type="evidence" value="ECO:0007669"/>
    <property type="project" value="UniProtKB-KW"/>
</dbReference>
<dbReference type="GO" id="GO:0046933">
    <property type="term" value="F:proton-transporting ATP synthase activity, rotational mechanism"/>
    <property type="evidence" value="ECO:0007669"/>
    <property type="project" value="UniProtKB-UniRule"/>
</dbReference>
<dbReference type="GO" id="GO:0042777">
    <property type="term" value="P:proton motive force-driven plasma membrane ATP synthesis"/>
    <property type="evidence" value="ECO:0007669"/>
    <property type="project" value="TreeGrafter"/>
</dbReference>
<dbReference type="CDD" id="cd00310">
    <property type="entry name" value="ATP-synt_Fo_a_6"/>
    <property type="match status" value="1"/>
</dbReference>
<dbReference type="FunFam" id="1.20.120.220:FF:000005">
    <property type="entry name" value="ATP synthase subunit a"/>
    <property type="match status" value="1"/>
</dbReference>
<dbReference type="Gene3D" id="1.20.120.220">
    <property type="entry name" value="ATP synthase, F0 complex, subunit A"/>
    <property type="match status" value="1"/>
</dbReference>
<dbReference type="HAMAP" id="MF_01393">
    <property type="entry name" value="ATP_synth_a_bact"/>
    <property type="match status" value="1"/>
</dbReference>
<dbReference type="InterPro" id="IPR045082">
    <property type="entry name" value="ATP_syn_F0_a_bact/chloroplast"/>
</dbReference>
<dbReference type="InterPro" id="IPR000568">
    <property type="entry name" value="ATP_synth_F0_asu"/>
</dbReference>
<dbReference type="InterPro" id="IPR023011">
    <property type="entry name" value="ATP_synth_F0_asu_AS"/>
</dbReference>
<dbReference type="InterPro" id="IPR035908">
    <property type="entry name" value="F0_ATP_A_sf"/>
</dbReference>
<dbReference type="NCBIfam" id="TIGR01131">
    <property type="entry name" value="ATP_synt_6_or_A"/>
    <property type="match status" value="1"/>
</dbReference>
<dbReference type="NCBIfam" id="NF004479">
    <property type="entry name" value="PRK05815.1-4"/>
    <property type="match status" value="1"/>
</dbReference>
<dbReference type="PANTHER" id="PTHR42823">
    <property type="entry name" value="ATP SYNTHASE SUBUNIT A, CHLOROPLASTIC"/>
    <property type="match status" value="1"/>
</dbReference>
<dbReference type="PANTHER" id="PTHR42823:SF3">
    <property type="entry name" value="ATP SYNTHASE SUBUNIT A, CHLOROPLASTIC"/>
    <property type="match status" value="1"/>
</dbReference>
<dbReference type="Pfam" id="PF00119">
    <property type="entry name" value="ATP-synt_A"/>
    <property type="match status" value="1"/>
</dbReference>
<dbReference type="PRINTS" id="PR00123">
    <property type="entry name" value="ATPASEA"/>
</dbReference>
<dbReference type="SUPFAM" id="SSF81336">
    <property type="entry name" value="F1F0 ATP synthase subunit A"/>
    <property type="match status" value="1"/>
</dbReference>
<dbReference type="PROSITE" id="PS00449">
    <property type="entry name" value="ATPASE_A"/>
    <property type="match status" value="1"/>
</dbReference>
<organism>
    <name type="scientific">Staphylococcus carnosus (strain TM300)</name>
    <dbReference type="NCBI Taxonomy" id="396513"/>
    <lineage>
        <taxon>Bacteria</taxon>
        <taxon>Bacillati</taxon>
        <taxon>Bacillota</taxon>
        <taxon>Bacilli</taxon>
        <taxon>Bacillales</taxon>
        <taxon>Staphylococcaceae</taxon>
        <taxon>Staphylococcus</taxon>
    </lineage>
</organism>
<feature type="chain" id="PRO_1000184291" description="ATP synthase subunit a">
    <location>
        <begin position="1"/>
        <end position="241"/>
    </location>
</feature>
<feature type="transmembrane region" description="Helical" evidence="1">
    <location>
        <begin position="21"/>
        <end position="41"/>
    </location>
</feature>
<feature type="transmembrane region" description="Helical" evidence="1">
    <location>
        <begin position="84"/>
        <end position="104"/>
    </location>
</feature>
<feature type="transmembrane region" description="Helical" evidence="1">
    <location>
        <begin position="116"/>
        <end position="136"/>
    </location>
</feature>
<feature type="transmembrane region" description="Helical" evidence="1">
    <location>
        <begin position="183"/>
        <end position="203"/>
    </location>
</feature>
<feature type="transmembrane region" description="Helical" evidence="1">
    <location>
        <begin position="207"/>
        <end position="227"/>
    </location>
</feature>
<name>ATP6_STACT</name>
<keyword id="KW-0066">ATP synthesis</keyword>
<keyword id="KW-1003">Cell membrane</keyword>
<keyword id="KW-0138">CF(0)</keyword>
<keyword id="KW-0375">Hydrogen ion transport</keyword>
<keyword id="KW-0406">Ion transport</keyword>
<keyword id="KW-0472">Membrane</keyword>
<keyword id="KW-1185">Reference proteome</keyword>
<keyword id="KW-0812">Transmembrane</keyword>
<keyword id="KW-1133">Transmembrane helix</keyword>
<keyword id="KW-0813">Transport</keyword>
<proteinExistence type="inferred from homology"/>
<evidence type="ECO:0000255" key="1">
    <source>
        <dbReference type="HAMAP-Rule" id="MF_01393"/>
    </source>
</evidence>
<comment type="function">
    <text evidence="1">Key component of the proton channel; it plays a direct role in the translocation of protons across the membrane.</text>
</comment>
<comment type="subunit">
    <text evidence="1">F-type ATPases have 2 components, CF(1) - the catalytic core - and CF(0) - the membrane proton channel. CF(1) has five subunits: alpha(3), beta(3), gamma(1), delta(1), epsilon(1). CF(0) has three main subunits: a(1), b(2) and c(9-12). The alpha and beta chains form an alternating ring which encloses part of the gamma chain. CF(1) is attached to CF(0) by a central stalk formed by the gamma and epsilon chains, while a peripheral stalk is formed by the delta and b chains.</text>
</comment>
<comment type="subcellular location">
    <subcellularLocation>
        <location evidence="1">Cell membrane</location>
        <topology evidence="1">Multi-pass membrane protein</topology>
    </subcellularLocation>
</comment>
<comment type="similarity">
    <text evidence="1">Belongs to the ATPase A chain family.</text>
</comment>
<gene>
    <name evidence="1" type="primary">atpB</name>
    <name type="ordered locus">Sca_1613</name>
</gene>
<accession>B9DMF0</accession>
<reference key="1">
    <citation type="journal article" date="2009" name="Appl. Environ. Microbiol.">
        <title>Genome analysis of the meat starter culture bacterium Staphylococcus carnosus TM300.</title>
        <authorList>
            <person name="Rosenstein R."/>
            <person name="Nerz C."/>
            <person name="Biswas L."/>
            <person name="Resch A."/>
            <person name="Raddatz G."/>
            <person name="Schuster S.C."/>
            <person name="Goetz F."/>
        </authorList>
    </citation>
    <scope>NUCLEOTIDE SEQUENCE [LARGE SCALE GENOMIC DNA]</scope>
    <source>
        <strain>TM300</strain>
    </source>
</reference>
<protein>
    <recommendedName>
        <fullName evidence="1">ATP synthase subunit a</fullName>
    </recommendedName>
    <alternativeName>
        <fullName evidence="1">ATP synthase F0 sector subunit a</fullName>
    </alternativeName>
    <alternativeName>
        <fullName evidence="1">F-ATPase subunit 6</fullName>
    </alternativeName>
</protein>